<gene>
    <name evidence="1" type="primary">pyrF</name>
    <name type="ordered locus">SPCG_0653</name>
</gene>
<dbReference type="EC" id="4.1.1.23" evidence="1"/>
<dbReference type="EMBL" id="CP001033">
    <property type="protein sequence ID" value="ACB89905.1"/>
    <property type="molecule type" value="Genomic_DNA"/>
</dbReference>
<dbReference type="RefSeq" id="WP_001206713.1">
    <property type="nucleotide sequence ID" value="NC_010582.1"/>
</dbReference>
<dbReference type="SMR" id="B2IN86"/>
<dbReference type="KEGG" id="spw:SPCG_0653"/>
<dbReference type="HOGENOM" id="CLU_067069_1_1_9"/>
<dbReference type="UniPathway" id="UPA00070">
    <property type="reaction ID" value="UER00120"/>
</dbReference>
<dbReference type="GO" id="GO:0005829">
    <property type="term" value="C:cytosol"/>
    <property type="evidence" value="ECO:0007669"/>
    <property type="project" value="TreeGrafter"/>
</dbReference>
<dbReference type="GO" id="GO:0004590">
    <property type="term" value="F:orotidine-5'-phosphate decarboxylase activity"/>
    <property type="evidence" value="ECO:0007669"/>
    <property type="project" value="UniProtKB-UniRule"/>
</dbReference>
<dbReference type="GO" id="GO:0006207">
    <property type="term" value="P:'de novo' pyrimidine nucleobase biosynthetic process"/>
    <property type="evidence" value="ECO:0007669"/>
    <property type="project" value="InterPro"/>
</dbReference>
<dbReference type="GO" id="GO:0044205">
    <property type="term" value="P:'de novo' UMP biosynthetic process"/>
    <property type="evidence" value="ECO:0007669"/>
    <property type="project" value="UniProtKB-UniRule"/>
</dbReference>
<dbReference type="CDD" id="cd04725">
    <property type="entry name" value="OMP_decarboxylase_like"/>
    <property type="match status" value="1"/>
</dbReference>
<dbReference type="FunFam" id="3.20.20.70:FF:000015">
    <property type="entry name" value="Orotidine 5'-phosphate decarboxylase"/>
    <property type="match status" value="1"/>
</dbReference>
<dbReference type="Gene3D" id="3.20.20.70">
    <property type="entry name" value="Aldolase class I"/>
    <property type="match status" value="1"/>
</dbReference>
<dbReference type="HAMAP" id="MF_01200_B">
    <property type="entry name" value="OMPdecase_type1_B"/>
    <property type="match status" value="1"/>
</dbReference>
<dbReference type="InterPro" id="IPR013785">
    <property type="entry name" value="Aldolase_TIM"/>
</dbReference>
<dbReference type="InterPro" id="IPR014732">
    <property type="entry name" value="OMPdecase"/>
</dbReference>
<dbReference type="InterPro" id="IPR018089">
    <property type="entry name" value="OMPdecase_AS"/>
</dbReference>
<dbReference type="InterPro" id="IPR047596">
    <property type="entry name" value="OMPdecase_bac"/>
</dbReference>
<dbReference type="InterPro" id="IPR001754">
    <property type="entry name" value="OMPdeCOase_dom"/>
</dbReference>
<dbReference type="InterPro" id="IPR011060">
    <property type="entry name" value="RibuloseP-bd_barrel"/>
</dbReference>
<dbReference type="NCBIfam" id="NF001273">
    <property type="entry name" value="PRK00230.1"/>
    <property type="match status" value="1"/>
</dbReference>
<dbReference type="NCBIfam" id="TIGR01740">
    <property type="entry name" value="pyrF"/>
    <property type="match status" value="1"/>
</dbReference>
<dbReference type="PANTHER" id="PTHR32119">
    <property type="entry name" value="OROTIDINE 5'-PHOSPHATE DECARBOXYLASE"/>
    <property type="match status" value="1"/>
</dbReference>
<dbReference type="PANTHER" id="PTHR32119:SF2">
    <property type="entry name" value="OROTIDINE 5'-PHOSPHATE DECARBOXYLASE"/>
    <property type="match status" value="1"/>
</dbReference>
<dbReference type="Pfam" id="PF00215">
    <property type="entry name" value="OMPdecase"/>
    <property type="match status" value="1"/>
</dbReference>
<dbReference type="SMART" id="SM00934">
    <property type="entry name" value="OMPdecase"/>
    <property type="match status" value="1"/>
</dbReference>
<dbReference type="SUPFAM" id="SSF51366">
    <property type="entry name" value="Ribulose-phoshate binding barrel"/>
    <property type="match status" value="1"/>
</dbReference>
<dbReference type="PROSITE" id="PS00156">
    <property type="entry name" value="OMPDECASE"/>
    <property type="match status" value="1"/>
</dbReference>
<accession>B2IN86</accession>
<name>PYRF_STRPS</name>
<feature type="chain" id="PRO_1000138564" description="Orotidine 5'-phosphate decarboxylase">
    <location>
        <begin position="1"/>
        <end position="233"/>
    </location>
</feature>
<feature type="active site" description="Proton donor" evidence="1">
    <location>
        <position position="63"/>
    </location>
</feature>
<feature type="binding site" evidence="1">
    <location>
        <position position="11"/>
    </location>
    <ligand>
        <name>substrate</name>
    </ligand>
</feature>
<feature type="binding site" evidence="1">
    <location>
        <position position="34"/>
    </location>
    <ligand>
        <name>substrate</name>
    </ligand>
</feature>
<feature type="binding site" evidence="1">
    <location>
        <begin position="61"/>
        <end position="70"/>
    </location>
    <ligand>
        <name>substrate</name>
    </ligand>
</feature>
<feature type="binding site" evidence="1">
    <location>
        <position position="117"/>
    </location>
    <ligand>
        <name>substrate</name>
    </ligand>
</feature>
<feature type="binding site" evidence="1">
    <location>
        <position position="179"/>
    </location>
    <ligand>
        <name>substrate</name>
    </ligand>
</feature>
<feature type="binding site" evidence="1">
    <location>
        <position position="188"/>
    </location>
    <ligand>
        <name>substrate</name>
    </ligand>
</feature>
<feature type="binding site" evidence="1">
    <location>
        <position position="208"/>
    </location>
    <ligand>
        <name>substrate</name>
    </ligand>
</feature>
<feature type="binding site" evidence="1">
    <location>
        <position position="209"/>
    </location>
    <ligand>
        <name>substrate</name>
    </ligand>
</feature>
<organism>
    <name type="scientific">Streptococcus pneumoniae (strain CGSP14)</name>
    <dbReference type="NCBI Taxonomy" id="516950"/>
    <lineage>
        <taxon>Bacteria</taxon>
        <taxon>Bacillati</taxon>
        <taxon>Bacillota</taxon>
        <taxon>Bacilli</taxon>
        <taxon>Lactobacillales</taxon>
        <taxon>Streptococcaceae</taxon>
        <taxon>Streptococcus</taxon>
    </lineage>
</organism>
<keyword id="KW-0210">Decarboxylase</keyword>
<keyword id="KW-0456">Lyase</keyword>
<keyword id="KW-0665">Pyrimidine biosynthesis</keyword>
<evidence type="ECO:0000255" key="1">
    <source>
        <dbReference type="HAMAP-Rule" id="MF_01200"/>
    </source>
</evidence>
<protein>
    <recommendedName>
        <fullName evidence="1">Orotidine 5'-phosphate decarboxylase</fullName>
        <ecNumber evidence="1">4.1.1.23</ecNumber>
    </recommendedName>
    <alternativeName>
        <fullName evidence="1">OMP decarboxylase</fullName>
        <shortName evidence="1">OMPDCase</shortName>
        <shortName evidence="1">OMPdecase</shortName>
    </alternativeName>
</protein>
<sequence>MREHRPIIALDFPSFEAVKEFLALFPAEESLYLKVGMELYYAAGPEIVSYLKGLGHSVFLDLKLHDIPNTVKSAMKILSQLGVDMTNVHAAGGVEMMKAAREGLGSQAKLIAVTQLTSTSEAQMQEFQNIQTSLQESVIHYAKKTAEAGLDGVVCSAQEVQVIKQATNPDFICLTPGIRPAGVAVGDQKRVMTPADAYQIGSDYIVVGRPITQAEEPVAAYHAIKDEWTQDWN</sequence>
<comment type="function">
    <text evidence="1">Catalyzes the decarboxylation of orotidine 5'-monophosphate (OMP) to uridine 5'-monophosphate (UMP).</text>
</comment>
<comment type="catalytic activity">
    <reaction evidence="1">
        <text>orotidine 5'-phosphate + H(+) = UMP + CO2</text>
        <dbReference type="Rhea" id="RHEA:11596"/>
        <dbReference type="ChEBI" id="CHEBI:15378"/>
        <dbReference type="ChEBI" id="CHEBI:16526"/>
        <dbReference type="ChEBI" id="CHEBI:57538"/>
        <dbReference type="ChEBI" id="CHEBI:57865"/>
        <dbReference type="EC" id="4.1.1.23"/>
    </reaction>
</comment>
<comment type="pathway">
    <text evidence="1">Pyrimidine metabolism; UMP biosynthesis via de novo pathway; UMP from orotate: step 2/2.</text>
</comment>
<comment type="subunit">
    <text evidence="1">Homodimer.</text>
</comment>
<comment type="similarity">
    <text evidence="1">Belongs to the OMP decarboxylase family. Type 1 subfamily.</text>
</comment>
<reference key="1">
    <citation type="journal article" date="2009" name="BMC Genomics">
        <title>Genome evolution driven by host adaptations results in a more virulent and antimicrobial-resistant Streptococcus pneumoniae serotype 14.</title>
        <authorList>
            <person name="Ding F."/>
            <person name="Tang P."/>
            <person name="Hsu M.-H."/>
            <person name="Cui P."/>
            <person name="Hu S."/>
            <person name="Yu J."/>
            <person name="Chiu C.-H."/>
        </authorList>
    </citation>
    <scope>NUCLEOTIDE SEQUENCE [LARGE SCALE GENOMIC DNA]</scope>
    <source>
        <strain>CGSP14</strain>
    </source>
</reference>
<proteinExistence type="inferred from homology"/>